<name>LAMB_SALTI</name>
<comment type="function">
    <text evidence="2">Involved in the transport of maltose and maltodextrins.</text>
</comment>
<comment type="catalytic activity">
    <reaction evidence="2">
        <text>beta-maltose(in) = beta-maltose(out)</text>
        <dbReference type="Rhea" id="RHEA:29731"/>
        <dbReference type="ChEBI" id="CHEBI:18147"/>
    </reaction>
</comment>
<comment type="subunit">
    <text evidence="2">Homotrimer formed of three 18-stranded antiparallel beta-barrels, containing three independent channels.</text>
</comment>
<comment type="subcellular location">
    <subcellularLocation>
        <location evidence="2">Cell outer membrane</location>
        <topology evidence="2">Multi-pass membrane protein</topology>
    </subcellularLocation>
</comment>
<comment type="induction">
    <text evidence="2">By maltose.</text>
</comment>
<comment type="similarity">
    <text evidence="2">Belongs to the porin LamB (TC 1.B.3) family.</text>
</comment>
<gene>
    <name evidence="2" type="primary">lamB</name>
    <name type="ordered locus">STY4427</name>
    <name type="ordered locus">t4137</name>
</gene>
<proteinExistence type="inferred from homology"/>
<reference key="1">
    <citation type="journal article" date="2001" name="Nature">
        <title>Complete genome sequence of a multiple drug resistant Salmonella enterica serovar Typhi CT18.</title>
        <authorList>
            <person name="Parkhill J."/>
            <person name="Dougan G."/>
            <person name="James K.D."/>
            <person name="Thomson N.R."/>
            <person name="Pickard D."/>
            <person name="Wain J."/>
            <person name="Churcher C.M."/>
            <person name="Mungall K.L."/>
            <person name="Bentley S.D."/>
            <person name="Holden M.T.G."/>
            <person name="Sebaihia M."/>
            <person name="Baker S."/>
            <person name="Basham D."/>
            <person name="Brooks K."/>
            <person name="Chillingworth T."/>
            <person name="Connerton P."/>
            <person name="Cronin A."/>
            <person name="Davis P."/>
            <person name="Davies R.M."/>
            <person name="Dowd L."/>
            <person name="White N."/>
            <person name="Farrar J."/>
            <person name="Feltwell T."/>
            <person name="Hamlin N."/>
            <person name="Haque A."/>
            <person name="Hien T.T."/>
            <person name="Holroyd S."/>
            <person name="Jagels K."/>
            <person name="Krogh A."/>
            <person name="Larsen T.S."/>
            <person name="Leather S."/>
            <person name="Moule S."/>
            <person name="O'Gaora P."/>
            <person name="Parry C."/>
            <person name="Quail M.A."/>
            <person name="Rutherford K.M."/>
            <person name="Simmonds M."/>
            <person name="Skelton J."/>
            <person name="Stevens K."/>
            <person name="Whitehead S."/>
            <person name="Barrell B.G."/>
        </authorList>
    </citation>
    <scope>NUCLEOTIDE SEQUENCE [LARGE SCALE GENOMIC DNA]</scope>
    <source>
        <strain>CT18</strain>
    </source>
</reference>
<reference key="2">
    <citation type="journal article" date="2003" name="J. Bacteriol.">
        <title>Comparative genomics of Salmonella enterica serovar Typhi strains Ty2 and CT18.</title>
        <authorList>
            <person name="Deng W."/>
            <person name="Liou S.-R."/>
            <person name="Plunkett G. III"/>
            <person name="Mayhew G.F."/>
            <person name="Rose D.J."/>
            <person name="Burland V."/>
            <person name="Kodoyianni V."/>
            <person name="Schwartz D.C."/>
            <person name="Blattner F.R."/>
        </authorList>
    </citation>
    <scope>NUCLEOTIDE SEQUENCE [LARGE SCALE GENOMIC DNA]</scope>
    <source>
        <strain>ATCC 700931 / Ty2</strain>
    </source>
</reference>
<accession>Q8Z1T9</accession>
<sequence length="452" mass="50588">MMITLRKLPLAVAVAAGVMSAQAMAVDFHGYARSGIGWTGSGGEQQCFQVTGAQSKYRLGNECETYAELKLGQEVWKEGDKSFYFDTNVAYSVNQQNDWESTDPAFREANVQGKNLIEWLPGSTIWAGKRFYQRHDVHMIDFYYWDISGPGAGIENIDLGFGKLSLAATRSTEAGGSYTFSSQNIYDEVKDTANDVFDVRLAGLQTNPDGVLELGVDYGRANTTDGYKLADGASKDGWMFTAEHTQSMLKGYNKFVVQYATDAMTTQGKGQARGSDGSSSFTEELPDGTKINYANKVINNNGDMWRILDHGAISLGDKWDLMYVGMYQNIDWDNNLGTEWWTVGVRPMYKWTPIMSTLLEVGYDNVKSQQTGDRNNQYKITLAQQWQAGDSIWSRPAIRIFATYAKWDEKWGYIKDGDNISRYAAATNSGISTNSRGDSDEWTFGAQMEIWW</sequence>
<feature type="signal peptide" evidence="2">
    <location>
        <begin position="1"/>
        <end position="25"/>
    </location>
</feature>
<feature type="chain" id="PRO_0000025179" description="Maltoporin">
    <location>
        <begin position="26"/>
        <end position="452"/>
    </location>
</feature>
<feature type="topological domain" description="Periplasmic" evidence="1">
    <location>
        <position position="26"/>
    </location>
</feature>
<feature type="transmembrane region" description="Beta stranded" evidence="1">
    <location>
        <begin position="27"/>
        <end position="35"/>
    </location>
</feature>
<feature type="topological domain" description="Extracellular" evidence="1">
    <location>
        <begin position="36"/>
        <end position="64"/>
    </location>
</feature>
<feature type="transmembrane region" description="Beta stranded" evidence="1">
    <location>
        <begin position="65"/>
        <end position="78"/>
    </location>
</feature>
<feature type="topological domain" description="Periplasmic" evidence="1">
    <location>
        <begin position="79"/>
        <end position="80"/>
    </location>
</feature>
<feature type="transmembrane region" description="Beta stranded" evidence="1">
    <location>
        <begin position="81"/>
        <end position="93"/>
    </location>
</feature>
<feature type="topological domain" description="Extracellular" evidence="1">
    <location>
        <begin position="94"/>
        <end position="104"/>
    </location>
</feature>
<feature type="transmembrane region" description="Beta stranded" evidence="1">
    <location>
        <begin position="105"/>
        <end position="115"/>
    </location>
</feature>
<feature type="topological domain" description="Periplasmic" evidence="1">
    <location>
        <begin position="116"/>
        <end position="122"/>
    </location>
</feature>
<feature type="transmembrane region" description="Beta stranded" evidence="1">
    <location>
        <begin position="123"/>
        <end position="130"/>
    </location>
</feature>
<feature type="topological domain" description="Extracellular" evidence="1">
    <location>
        <begin position="131"/>
        <end position="148"/>
    </location>
</feature>
<feature type="transmembrane region" description="Beta stranded" evidence="1">
    <location>
        <begin position="149"/>
        <end position="159"/>
    </location>
</feature>
<feature type="topological domain" description="Periplasmic" evidence="1">
    <location>
        <begin position="160"/>
        <end position="161"/>
    </location>
</feature>
<feature type="transmembrane region" description="Beta stranded" evidence="1">
    <location>
        <begin position="162"/>
        <end position="173"/>
    </location>
</feature>
<feature type="topological domain" description="Extracellular" evidence="1">
    <location>
        <begin position="174"/>
        <end position="191"/>
    </location>
</feature>
<feature type="transmembrane region" description="Beta stranded" evidence="1">
    <location>
        <begin position="192"/>
        <end position="205"/>
    </location>
</feature>
<feature type="topological domain" description="Periplasmic" evidence="1">
    <location>
        <begin position="206"/>
        <end position="209"/>
    </location>
</feature>
<feature type="transmembrane region" description="Beta stranded" evidence="1">
    <location>
        <begin position="210"/>
        <end position="222"/>
    </location>
</feature>
<feature type="topological domain" description="Extracellular" evidence="1">
    <location>
        <begin position="223"/>
        <end position="234"/>
    </location>
</feature>
<feature type="transmembrane region" description="Beta stranded" evidence="1">
    <location>
        <begin position="235"/>
        <end position="248"/>
    </location>
</feature>
<feature type="topological domain" description="Periplasmic" evidence="1">
    <location>
        <begin position="249"/>
        <end position="250"/>
    </location>
</feature>
<feature type="transmembrane region" description="Beta stranded" evidence="1">
    <location>
        <begin position="251"/>
        <end position="263"/>
    </location>
</feature>
<feature type="topological domain" description="Extracellular" evidence="1">
    <location>
        <begin position="264"/>
        <end position="300"/>
    </location>
</feature>
<feature type="transmembrane region" description="Beta stranded" evidence="1">
    <location>
        <begin position="301"/>
        <end position="315"/>
    </location>
</feature>
<feature type="topological domain" description="Periplasmic" evidence="1">
    <location>
        <begin position="316"/>
        <end position="317"/>
    </location>
</feature>
<feature type="transmembrane region" description="Beta stranded" evidence="1">
    <location>
        <begin position="318"/>
        <end position="333"/>
    </location>
</feature>
<feature type="topological domain" description="Extracellular" evidence="1">
    <location>
        <begin position="334"/>
        <end position="336"/>
    </location>
</feature>
<feature type="transmembrane region" description="Beta stranded" evidence="1">
    <location>
        <begin position="337"/>
        <end position="351"/>
    </location>
</feature>
<feature type="topological domain" description="Periplasmic" evidence="1">
    <location>
        <begin position="352"/>
        <end position="353"/>
    </location>
</feature>
<feature type="transmembrane region" description="Beta stranded" evidence="1">
    <location>
        <begin position="354"/>
        <end position="369"/>
    </location>
</feature>
<feature type="topological domain" description="Extracellular" evidence="1">
    <location>
        <begin position="370"/>
        <end position="372"/>
    </location>
</feature>
<feature type="transmembrane region" description="Beta stranded" evidence="1">
    <location>
        <begin position="373"/>
        <end position="388"/>
    </location>
</feature>
<feature type="topological domain" description="Periplasmic" evidence="1">
    <location>
        <begin position="389"/>
        <end position="395"/>
    </location>
</feature>
<feature type="transmembrane region" description="Beta stranded" evidence="1">
    <location>
        <begin position="396"/>
        <end position="410"/>
    </location>
</feature>
<feature type="topological domain" description="Extracellular" evidence="1">
    <location>
        <begin position="411"/>
        <end position="436"/>
    </location>
</feature>
<feature type="transmembrane region" description="Beta stranded" evidence="1">
    <location>
        <begin position="437"/>
        <end position="451"/>
    </location>
</feature>
<feature type="topological domain" description="Periplasmic" evidence="1">
    <location>
        <position position="452"/>
    </location>
</feature>
<feature type="site" description="Greasy slide, important in sugar transport" evidence="2">
    <location>
        <position position="31"/>
    </location>
</feature>
<feature type="site" description="Greasy slide, important in sugar transport" evidence="2">
    <location>
        <position position="66"/>
    </location>
</feature>
<feature type="site" description="Greasy slide, important in sugar transport" evidence="2">
    <location>
        <position position="99"/>
    </location>
</feature>
<feature type="site" description="Important in sugar transport" evidence="2">
    <location>
        <position position="143"/>
    </location>
</feature>
<feature type="site" description="Greasy slide, important in sugar transport" evidence="2">
    <location>
        <position position="252"/>
    </location>
</feature>
<feature type="site" description="Greasy slide, important in sugar transport" evidence="2">
    <location>
        <position position="393"/>
    </location>
</feature>
<feature type="site" description="Greasy slide, important in sugar transport" evidence="2">
    <location>
        <position position="451"/>
    </location>
</feature>
<feature type="disulfide bond" evidence="1">
    <location>
        <begin position="47"/>
        <end position="63"/>
    </location>
</feature>
<keyword id="KW-0998">Cell outer membrane</keyword>
<keyword id="KW-1015">Disulfide bond</keyword>
<keyword id="KW-0406">Ion transport</keyword>
<keyword id="KW-0472">Membrane</keyword>
<keyword id="KW-0626">Porin</keyword>
<keyword id="KW-0732">Signal</keyword>
<keyword id="KW-0762">Sugar transport</keyword>
<keyword id="KW-0812">Transmembrane</keyword>
<keyword id="KW-1134">Transmembrane beta strand</keyword>
<keyword id="KW-0813">Transport</keyword>
<evidence type="ECO:0000250" key="1"/>
<evidence type="ECO:0000255" key="2">
    <source>
        <dbReference type="HAMAP-Rule" id="MF_01301"/>
    </source>
</evidence>
<protein>
    <recommendedName>
        <fullName evidence="2">Maltoporin</fullName>
    </recommendedName>
    <alternativeName>
        <fullName evidence="2">Maltose-inducible porin</fullName>
    </alternativeName>
</protein>
<dbReference type="EMBL" id="AL513382">
    <property type="protein sequence ID" value="CAD09215.1"/>
    <property type="molecule type" value="Genomic_DNA"/>
</dbReference>
<dbReference type="EMBL" id="AE014613">
    <property type="protein sequence ID" value="AAO71601.1"/>
    <property type="molecule type" value="Genomic_DNA"/>
</dbReference>
<dbReference type="RefSeq" id="NP_458529.1">
    <property type="nucleotide sequence ID" value="NC_003198.1"/>
</dbReference>
<dbReference type="RefSeq" id="WP_000973678.1">
    <property type="nucleotide sequence ID" value="NZ_WSUR01000027.1"/>
</dbReference>
<dbReference type="SMR" id="Q8Z1T9"/>
<dbReference type="STRING" id="220341.gene:17588259"/>
<dbReference type="KEGG" id="stt:t4137"/>
<dbReference type="KEGG" id="sty:STY4427"/>
<dbReference type="PATRIC" id="fig|220341.7.peg.4527"/>
<dbReference type="eggNOG" id="COG4580">
    <property type="taxonomic scope" value="Bacteria"/>
</dbReference>
<dbReference type="HOGENOM" id="CLU_032473_4_1_6"/>
<dbReference type="OMA" id="VSQQNDW"/>
<dbReference type="OrthoDB" id="106611at2"/>
<dbReference type="Proteomes" id="UP000000541">
    <property type="component" value="Chromosome"/>
</dbReference>
<dbReference type="Proteomes" id="UP000002670">
    <property type="component" value="Chromosome"/>
</dbReference>
<dbReference type="GO" id="GO:0009279">
    <property type="term" value="C:cell outer membrane"/>
    <property type="evidence" value="ECO:0007669"/>
    <property type="project" value="UniProtKB-SubCell"/>
</dbReference>
<dbReference type="GO" id="GO:0046930">
    <property type="term" value="C:pore complex"/>
    <property type="evidence" value="ECO:0007669"/>
    <property type="project" value="UniProtKB-KW"/>
</dbReference>
<dbReference type="GO" id="GO:0042958">
    <property type="term" value="F:maltodextrin transmembrane transporter activity"/>
    <property type="evidence" value="ECO:0007669"/>
    <property type="project" value="InterPro"/>
</dbReference>
<dbReference type="GO" id="GO:0015481">
    <property type="term" value="F:maltose transporting porin activity"/>
    <property type="evidence" value="ECO:0007669"/>
    <property type="project" value="InterPro"/>
</dbReference>
<dbReference type="GO" id="GO:0006811">
    <property type="term" value="P:monoatomic ion transport"/>
    <property type="evidence" value="ECO:0007669"/>
    <property type="project" value="UniProtKB-KW"/>
</dbReference>
<dbReference type="CDD" id="cd01346">
    <property type="entry name" value="Maltoporin-like"/>
    <property type="match status" value="1"/>
</dbReference>
<dbReference type="FunFam" id="2.40.170.10:FF:000001">
    <property type="entry name" value="Maltoporin"/>
    <property type="match status" value="1"/>
</dbReference>
<dbReference type="Gene3D" id="2.40.170.10">
    <property type="entry name" value="Porin, LamB type"/>
    <property type="match status" value="1"/>
</dbReference>
<dbReference type="HAMAP" id="MF_01301">
    <property type="entry name" value="LamB"/>
    <property type="match status" value="1"/>
</dbReference>
<dbReference type="InterPro" id="IPR050286">
    <property type="entry name" value="G_neg_Bact_CarbUptk_Porin"/>
</dbReference>
<dbReference type="InterPro" id="IPR023738">
    <property type="entry name" value="Maltoporin"/>
</dbReference>
<dbReference type="InterPro" id="IPR003192">
    <property type="entry name" value="Porin_LamB"/>
</dbReference>
<dbReference type="InterPro" id="IPR036998">
    <property type="entry name" value="Porin_LamB_sf"/>
</dbReference>
<dbReference type="NCBIfam" id="NF006860">
    <property type="entry name" value="PRK09360.1"/>
    <property type="match status" value="1"/>
</dbReference>
<dbReference type="PANTHER" id="PTHR38762">
    <property type="entry name" value="CRYPTIC OUTER MEMBRANE PORIN BGLH-RELATED"/>
    <property type="match status" value="1"/>
</dbReference>
<dbReference type="PANTHER" id="PTHR38762:SF1">
    <property type="entry name" value="CRYPTIC OUTER MEMBRANE PORIN BGLH-RELATED"/>
    <property type="match status" value="1"/>
</dbReference>
<dbReference type="Pfam" id="PF02264">
    <property type="entry name" value="LamB"/>
    <property type="match status" value="1"/>
</dbReference>
<dbReference type="SUPFAM" id="SSF56935">
    <property type="entry name" value="Porins"/>
    <property type="match status" value="1"/>
</dbReference>
<organism>
    <name type="scientific">Salmonella typhi</name>
    <dbReference type="NCBI Taxonomy" id="90370"/>
    <lineage>
        <taxon>Bacteria</taxon>
        <taxon>Pseudomonadati</taxon>
        <taxon>Pseudomonadota</taxon>
        <taxon>Gammaproteobacteria</taxon>
        <taxon>Enterobacterales</taxon>
        <taxon>Enterobacteriaceae</taxon>
        <taxon>Salmonella</taxon>
    </lineage>
</organism>